<gene>
    <name evidence="1" type="primary">pdxJ</name>
    <name type="ordered locus">Erum2920</name>
    <name type="ordered locus">ERWE_CDS_02980</name>
</gene>
<comment type="function">
    <text evidence="1">Catalyzes the complicated ring closure reaction between the two acyclic compounds 1-deoxy-D-xylulose-5-phosphate (DXP) and 3-amino-2-oxopropyl phosphate (1-amino-acetone-3-phosphate or AAP) to form pyridoxine 5'-phosphate (PNP) and inorganic phosphate.</text>
</comment>
<comment type="catalytic activity">
    <reaction evidence="1">
        <text>3-amino-2-oxopropyl phosphate + 1-deoxy-D-xylulose 5-phosphate = pyridoxine 5'-phosphate + phosphate + 2 H2O + H(+)</text>
        <dbReference type="Rhea" id="RHEA:15265"/>
        <dbReference type="ChEBI" id="CHEBI:15377"/>
        <dbReference type="ChEBI" id="CHEBI:15378"/>
        <dbReference type="ChEBI" id="CHEBI:43474"/>
        <dbReference type="ChEBI" id="CHEBI:57279"/>
        <dbReference type="ChEBI" id="CHEBI:57792"/>
        <dbReference type="ChEBI" id="CHEBI:58589"/>
        <dbReference type="EC" id="2.6.99.2"/>
    </reaction>
</comment>
<comment type="pathway">
    <text evidence="1">Cofactor biosynthesis; pyridoxine 5'-phosphate biosynthesis; pyridoxine 5'-phosphate from D-erythrose 4-phosphate: step 5/5.</text>
</comment>
<comment type="subunit">
    <text evidence="1">Homooctamer; tetramer of dimers.</text>
</comment>
<comment type="subcellular location">
    <subcellularLocation>
        <location evidence="1">Cytoplasm</location>
    </subcellularLocation>
</comment>
<comment type="similarity">
    <text evidence="1">Belongs to the PNP synthase family.</text>
</comment>
<proteinExistence type="inferred from homology"/>
<feature type="chain" id="PRO_0000231806" description="Pyridoxine 5'-phosphate synthase">
    <location>
        <begin position="1"/>
        <end position="238"/>
    </location>
</feature>
<feature type="active site" description="Proton acceptor" evidence="1">
    <location>
        <position position="45"/>
    </location>
</feature>
<feature type="active site" description="Proton acceptor" evidence="1">
    <location>
        <position position="72"/>
    </location>
</feature>
<feature type="active site" description="Proton donor" evidence="1">
    <location>
        <position position="189"/>
    </location>
</feature>
<feature type="binding site" evidence="1">
    <location>
        <position position="9"/>
    </location>
    <ligand>
        <name>3-amino-2-oxopropyl phosphate</name>
        <dbReference type="ChEBI" id="CHEBI:57279"/>
    </ligand>
</feature>
<feature type="binding site" evidence="1">
    <location>
        <begin position="11"/>
        <end position="12"/>
    </location>
    <ligand>
        <name>1-deoxy-D-xylulose 5-phosphate</name>
        <dbReference type="ChEBI" id="CHEBI:57792"/>
    </ligand>
</feature>
<feature type="binding site" evidence="1">
    <location>
        <position position="20"/>
    </location>
    <ligand>
        <name>3-amino-2-oxopropyl phosphate</name>
        <dbReference type="ChEBI" id="CHEBI:57279"/>
    </ligand>
</feature>
<feature type="binding site" evidence="1">
    <location>
        <position position="47"/>
    </location>
    <ligand>
        <name>1-deoxy-D-xylulose 5-phosphate</name>
        <dbReference type="ChEBI" id="CHEBI:57792"/>
    </ligand>
</feature>
<feature type="binding site" evidence="1">
    <location>
        <position position="52"/>
    </location>
    <ligand>
        <name>1-deoxy-D-xylulose 5-phosphate</name>
        <dbReference type="ChEBI" id="CHEBI:57792"/>
    </ligand>
</feature>
<feature type="binding site" evidence="1">
    <location>
        <position position="102"/>
    </location>
    <ligand>
        <name>1-deoxy-D-xylulose 5-phosphate</name>
        <dbReference type="ChEBI" id="CHEBI:57792"/>
    </ligand>
</feature>
<feature type="binding site" evidence="1">
    <location>
        <position position="190"/>
    </location>
    <ligand>
        <name>3-amino-2-oxopropyl phosphate</name>
        <dbReference type="ChEBI" id="CHEBI:57279"/>
    </ligand>
</feature>
<feature type="binding site" evidence="1">
    <location>
        <begin position="211"/>
        <end position="212"/>
    </location>
    <ligand>
        <name>3-amino-2-oxopropyl phosphate</name>
        <dbReference type="ChEBI" id="CHEBI:57279"/>
    </ligand>
</feature>
<feature type="site" description="Transition state stabilizer" evidence="1">
    <location>
        <position position="153"/>
    </location>
</feature>
<sequence>MSSIALGVNIDHIATLRNARNTEYPDLVEIANIAVNNGADFITVHLREDRRHIRDSDVFRLKDNLNVPLNLEIAAIDEMLAIAIAVQPECVCLVPEKRQELTTEGGLDVKNMFTYLMPFITQLHNHNIKVTLFVEPDINQINYAKKLSVDNIELHTGVYCNHNTQNELNRILEAAKHCYTNKIECHAGHGLDYQSAATIARVPYISALNIGHFLICEAVLHGIGTSIYKMKKVITNPL</sequence>
<reference key="1">
    <citation type="journal article" date="2005" name="Proc. Natl. Acad. Sci. U.S.A.">
        <title>The genome of the heartwater agent Ehrlichia ruminantium contains multiple tandem repeats of actively variable copy number.</title>
        <authorList>
            <person name="Collins N.E."/>
            <person name="Liebenberg J."/>
            <person name="de Villiers E.P."/>
            <person name="Brayton K.A."/>
            <person name="Louw E."/>
            <person name="Pretorius A."/>
            <person name="Faber F.E."/>
            <person name="van Heerden H."/>
            <person name="Josemans A."/>
            <person name="van Kleef M."/>
            <person name="Steyn H.C."/>
            <person name="van Strijp M.F."/>
            <person name="Zweygarth E."/>
            <person name="Jongejan F."/>
            <person name="Maillard J.C."/>
            <person name="Berthier D."/>
            <person name="Botha M."/>
            <person name="Joubert F."/>
            <person name="Corton C.H."/>
            <person name="Thomson N.R."/>
            <person name="Allsopp M.T."/>
            <person name="Allsopp B.A."/>
        </authorList>
    </citation>
    <scope>NUCLEOTIDE SEQUENCE [LARGE SCALE GENOMIC DNA]</scope>
    <source>
        <strain>Welgevonden</strain>
    </source>
</reference>
<reference key="2">
    <citation type="journal article" date="2006" name="J. Bacteriol.">
        <title>Comparative genomic analysis of three strains of Ehrlichia ruminantium reveals an active process of genome size plasticity.</title>
        <authorList>
            <person name="Frutos R."/>
            <person name="Viari A."/>
            <person name="Ferraz C."/>
            <person name="Morgat A."/>
            <person name="Eychenie S."/>
            <person name="Kandassamy Y."/>
            <person name="Chantal I."/>
            <person name="Bensaid A."/>
            <person name="Coissac E."/>
            <person name="Vachiery N."/>
            <person name="Demaille J."/>
            <person name="Martinez D."/>
        </authorList>
    </citation>
    <scope>NUCLEOTIDE SEQUENCE [LARGE SCALE GENOMIC DNA]</scope>
    <source>
        <strain>Welgevonden</strain>
    </source>
</reference>
<keyword id="KW-0963">Cytoplasm</keyword>
<keyword id="KW-0664">Pyridoxine biosynthesis</keyword>
<keyword id="KW-0808">Transferase</keyword>
<protein>
    <recommendedName>
        <fullName evidence="1">Pyridoxine 5'-phosphate synthase</fullName>
        <shortName evidence="1">PNP synthase</shortName>
        <ecNumber evidence="1">2.6.99.2</ecNumber>
    </recommendedName>
</protein>
<name>PDXJ_EHRRW</name>
<accession>Q5HBN7</accession>
<accession>Q5FE81</accession>
<organism>
    <name type="scientific">Ehrlichia ruminantium (strain Welgevonden)</name>
    <dbReference type="NCBI Taxonomy" id="254945"/>
    <lineage>
        <taxon>Bacteria</taxon>
        <taxon>Pseudomonadati</taxon>
        <taxon>Pseudomonadota</taxon>
        <taxon>Alphaproteobacteria</taxon>
        <taxon>Rickettsiales</taxon>
        <taxon>Anaplasmataceae</taxon>
        <taxon>Ehrlichia</taxon>
    </lineage>
</organism>
<dbReference type="EC" id="2.6.99.2" evidence="1"/>
<dbReference type="EMBL" id="CR767821">
    <property type="protein sequence ID" value="CAH58009.1"/>
    <property type="molecule type" value="Genomic_DNA"/>
</dbReference>
<dbReference type="EMBL" id="CR925678">
    <property type="protein sequence ID" value="CAI26792.1"/>
    <property type="molecule type" value="Genomic_DNA"/>
</dbReference>
<dbReference type="RefSeq" id="WP_011154974.1">
    <property type="nucleotide sequence ID" value="NC_005295.2"/>
</dbReference>
<dbReference type="SMR" id="Q5HBN7"/>
<dbReference type="GeneID" id="33057719"/>
<dbReference type="KEGG" id="eru:Erum2920"/>
<dbReference type="KEGG" id="erw:ERWE_CDS_02980"/>
<dbReference type="eggNOG" id="COG0854">
    <property type="taxonomic scope" value="Bacteria"/>
</dbReference>
<dbReference type="HOGENOM" id="CLU_074563_0_0_5"/>
<dbReference type="UniPathway" id="UPA00244">
    <property type="reaction ID" value="UER00313"/>
</dbReference>
<dbReference type="Proteomes" id="UP000001021">
    <property type="component" value="Chromosome"/>
</dbReference>
<dbReference type="GO" id="GO:0005829">
    <property type="term" value="C:cytosol"/>
    <property type="evidence" value="ECO:0007669"/>
    <property type="project" value="TreeGrafter"/>
</dbReference>
<dbReference type="GO" id="GO:0033856">
    <property type="term" value="F:pyridoxine 5'-phosphate synthase activity"/>
    <property type="evidence" value="ECO:0007669"/>
    <property type="project" value="UniProtKB-EC"/>
</dbReference>
<dbReference type="GO" id="GO:0008615">
    <property type="term" value="P:pyridoxine biosynthetic process"/>
    <property type="evidence" value="ECO:0007669"/>
    <property type="project" value="UniProtKB-UniRule"/>
</dbReference>
<dbReference type="CDD" id="cd00003">
    <property type="entry name" value="PNPsynthase"/>
    <property type="match status" value="1"/>
</dbReference>
<dbReference type="Gene3D" id="3.20.20.70">
    <property type="entry name" value="Aldolase class I"/>
    <property type="match status" value="1"/>
</dbReference>
<dbReference type="HAMAP" id="MF_00279">
    <property type="entry name" value="PdxJ"/>
    <property type="match status" value="1"/>
</dbReference>
<dbReference type="InterPro" id="IPR013785">
    <property type="entry name" value="Aldolase_TIM"/>
</dbReference>
<dbReference type="InterPro" id="IPR004569">
    <property type="entry name" value="PyrdxlP_synth_PdxJ"/>
</dbReference>
<dbReference type="InterPro" id="IPR036130">
    <property type="entry name" value="Pyridoxine-5'_phos_synth"/>
</dbReference>
<dbReference type="NCBIfam" id="TIGR00559">
    <property type="entry name" value="pdxJ"/>
    <property type="match status" value="1"/>
</dbReference>
<dbReference type="NCBIfam" id="NF003625">
    <property type="entry name" value="PRK05265.1-3"/>
    <property type="match status" value="1"/>
</dbReference>
<dbReference type="NCBIfam" id="NF003627">
    <property type="entry name" value="PRK05265.1-5"/>
    <property type="match status" value="1"/>
</dbReference>
<dbReference type="PANTHER" id="PTHR30456">
    <property type="entry name" value="PYRIDOXINE 5'-PHOSPHATE SYNTHASE"/>
    <property type="match status" value="1"/>
</dbReference>
<dbReference type="PANTHER" id="PTHR30456:SF0">
    <property type="entry name" value="PYRIDOXINE 5'-PHOSPHATE SYNTHASE"/>
    <property type="match status" value="1"/>
</dbReference>
<dbReference type="Pfam" id="PF03740">
    <property type="entry name" value="PdxJ"/>
    <property type="match status" value="1"/>
</dbReference>
<dbReference type="SUPFAM" id="SSF63892">
    <property type="entry name" value="Pyridoxine 5'-phosphate synthase"/>
    <property type="match status" value="1"/>
</dbReference>
<evidence type="ECO:0000255" key="1">
    <source>
        <dbReference type="HAMAP-Rule" id="MF_00279"/>
    </source>
</evidence>